<accession>B6J4X6</accession>
<dbReference type="EC" id="3.1.3.5" evidence="1"/>
<dbReference type="EMBL" id="CP001020">
    <property type="protein sequence ID" value="ACJ19641.1"/>
    <property type="molecule type" value="Genomic_DNA"/>
</dbReference>
<dbReference type="RefSeq" id="WP_005770587.1">
    <property type="nucleotide sequence ID" value="NC_011528.1"/>
</dbReference>
<dbReference type="SMR" id="B6J4X6"/>
<dbReference type="KEGG" id="cbc:CbuK_0339"/>
<dbReference type="HOGENOM" id="CLU_045192_1_2_6"/>
<dbReference type="GO" id="GO:0005737">
    <property type="term" value="C:cytoplasm"/>
    <property type="evidence" value="ECO:0007669"/>
    <property type="project" value="UniProtKB-SubCell"/>
</dbReference>
<dbReference type="GO" id="GO:0008254">
    <property type="term" value="F:3'-nucleotidase activity"/>
    <property type="evidence" value="ECO:0007669"/>
    <property type="project" value="TreeGrafter"/>
</dbReference>
<dbReference type="GO" id="GO:0008253">
    <property type="term" value="F:5'-nucleotidase activity"/>
    <property type="evidence" value="ECO:0007669"/>
    <property type="project" value="UniProtKB-UniRule"/>
</dbReference>
<dbReference type="GO" id="GO:0004309">
    <property type="term" value="F:exopolyphosphatase activity"/>
    <property type="evidence" value="ECO:0007669"/>
    <property type="project" value="TreeGrafter"/>
</dbReference>
<dbReference type="GO" id="GO:0046872">
    <property type="term" value="F:metal ion binding"/>
    <property type="evidence" value="ECO:0007669"/>
    <property type="project" value="UniProtKB-UniRule"/>
</dbReference>
<dbReference type="GO" id="GO:0000166">
    <property type="term" value="F:nucleotide binding"/>
    <property type="evidence" value="ECO:0007669"/>
    <property type="project" value="UniProtKB-KW"/>
</dbReference>
<dbReference type="FunFam" id="3.40.1210.10:FF:000001">
    <property type="entry name" value="5'/3'-nucleotidase SurE"/>
    <property type="match status" value="1"/>
</dbReference>
<dbReference type="Gene3D" id="3.40.1210.10">
    <property type="entry name" value="Survival protein SurE-like phosphatase/nucleotidase"/>
    <property type="match status" value="1"/>
</dbReference>
<dbReference type="HAMAP" id="MF_00060">
    <property type="entry name" value="SurE"/>
    <property type="match status" value="1"/>
</dbReference>
<dbReference type="InterPro" id="IPR030048">
    <property type="entry name" value="SurE"/>
</dbReference>
<dbReference type="InterPro" id="IPR002828">
    <property type="entry name" value="SurE-like_Pase/nucleotidase"/>
</dbReference>
<dbReference type="InterPro" id="IPR036523">
    <property type="entry name" value="SurE-like_sf"/>
</dbReference>
<dbReference type="NCBIfam" id="NF001489">
    <property type="entry name" value="PRK00346.1-3"/>
    <property type="match status" value="1"/>
</dbReference>
<dbReference type="NCBIfam" id="NF001490">
    <property type="entry name" value="PRK00346.1-4"/>
    <property type="match status" value="1"/>
</dbReference>
<dbReference type="NCBIfam" id="TIGR00087">
    <property type="entry name" value="surE"/>
    <property type="match status" value="1"/>
</dbReference>
<dbReference type="PANTHER" id="PTHR30457">
    <property type="entry name" value="5'-NUCLEOTIDASE SURE"/>
    <property type="match status" value="1"/>
</dbReference>
<dbReference type="PANTHER" id="PTHR30457:SF12">
    <property type="entry name" value="5'_3'-NUCLEOTIDASE SURE"/>
    <property type="match status" value="1"/>
</dbReference>
<dbReference type="Pfam" id="PF01975">
    <property type="entry name" value="SurE"/>
    <property type="match status" value="1"/>
</dbReference>
<dbReference type="SUPFAM" id="SSF64167">
    <property type="entry name" value="SurE-like"/>
    <property type="match status" value="1"/>
</dbReference>
<sequence>MKKTATPKLRLLLSNDDGVYAKGLAILAKTLADLGEVDVVAPDRNRSGASNSLTLNAPLHIKNLENGMISVEGTPTDCVHLAITGVLPEMPDMVVAGINAGPNLGDDVWYSGTVAAAMEGRFLGLPALAVSLGGELFRYYETAAKVVYQLIQRIEKDPLPPSTILNINVPDLPYEELKGFEVTRLGTRHRAEPTIRQIDPRGHPIYWVGAAGPEQDSGPGTDFFAMNHHCVSITPLRVDLTHYEAFDQLASWVKRLEM</sequence>
<organism>
    <name type="scientific">Coxiella burnetii (strain CbuK_Q154)</name>
    <name type="common">Coxiella burnetii (strain Q154)</name>
    <dbReference type="NCBI Taxonomy" id="434924"/>
    <lineage>
        <taxon>Bacteria</taxon>
        <taxon>Pseudomonadati</taxon>
        <taxon>Pseudomonadota</taxon>
        <taxon>Gammaproteobacteria</taxon>
        <taxon>Legionellales</taxon>
        <taxon>Coxiellaceae</taxon>
        <taxon>Coxiella</taxon>
    </lineage>
</organism>
<name>SURE_COXB1</name>
<gene>
    <name evidence="1" type="primary">surE</name>
    <name type="ordered locus">CbuK_0339</name>
</gene>
<keyword id="KW-0963">Cytoplasm</keyword>
<keyword id="KW-0378">Hydrolase</keyword>
<keyword id="KW-0479">Metal-binding</keyword>
<keyword id="KW-0547">Nucleotide-binding</keyword>
<protein>
    <recommendedName>
        <fullName evidence="1">5'-nucleotidase SurE</fullName>
        <ecNumber evidence="1">3.1.3.5</ecNumber>
    </recommendedName>
    <alternativeName>
        <fullName evidence="1">Nucleoside 5'-monophosphate phosphohydrolase</fullName>
    </alternativeName>
</protein>
<proteinExistence type="inferred from homology"/>
<evidence type="ECO:0000255" key="1">
    <source>
        <dbReference type="HAMAP-Rule" id="MF_00060"/>
    </source>
</evidence>
<reference key="1">
    <citation type="journal article" date="2009" name="Infect. Immun.">
        <title>Comparative genomics reveal extensive transposon-mediated genomic plasticity and diversity among potential effector proteins within the genus Coxiella.</title>
        <authorList>
            <person name="Beare P.A."/>
            <person name="Unsworth N."/>
            <person name="Andoh M."/>
            <person name="Voth D.E."/>
            <person name="Omsland A."/>
            <person name="Gilk S.D."/>
            <person name="Williams K.P."/>
            <person name="Sobral B.W."/>
            <person name="Kupko J.J. III"/>
            <person name="Porcella S.F."/>
            <person name="Samuel J.E."/>
            <person name="Heinzen R.A."/>
        </authorList>
    </citation>
    <scope>NUCLEOTIDE SEQUENCE [LARGE SCALE GENOMIC DNA]</scope>
    <source>
        <strain>CbuK_Q154</strain>
    </source>
</reference>
<comment type="function">
    <text evidence="1">Nucleotidase that shows phosphatase activity on nucleoside 5'-monophosphates.</text>
</comment>
<comment type="catalytic activity">
    <reaction evidence="1">
        <text>a ribonucleoside 5'-phosphate + H2O = a ribonucleoside + phosphate</text>
        <dbReference type="Rhea" id="RHEA:12484"/>
        <dbReference type="ChEBI" id="CHEBI:15377"/>
        <dbReference type="ChEBI" id="CHEBI:18254"/>
        <dbReference type="ChEBI" id="CHEBI:43474"/>
        <dbReference type="ChEBI" id="CHEBI:58043"/>
        <dbReference type="EC" id="3.1.3.5"/>
    </reaction>
</comment>
<comment type="cofactor">
    <cofactor evidence="1">
        <name>a divalent metal cation</name>
        <dbReference type="ChEBI" id="CHEBI:60240"/>
    </cofactor>
    <text evidence="1">Binds 1 divalent metal cation per subunit.</text>
</comment>
<comment type="subcellular location">
    <subcellularLocation>
        <location evidence="1">Cytoplasm</location>
    </subcellularLocation>
</comment>
<comment type="similarity">
    <text evidence="1">Belongs to the SurE nucleotidase family.</text>
</comment>
<feature type="chain" id="PRO_1000091995" description="5'-nucleotidase SurE">
    <location>
        <begin position="1"/>
        <end position="258"/>
    </location>
</feature>
<feature type="binding site" evidence="1">
    <location>
        <position position="16"/>
    </location>
    <ligand>
        <name>a divalent metal cation</name>
        <dbReference type="ChEBI" id="CHEBI:60240"/>
    </ligand>
</feature>
<feature type="binding site" evidence="1">
    <location>
        <position position="17"/>
    </location>
    <ligand>
        <name>a divalent metal cation</name>
        <dbReference type="ChEBI" id="CHEBI:60240"/>
    </ligand>
</feature>
<feature type="binding site" evidence="1">
    <location>
        <position position="47"/>
    </location>
    <ligand>
        <name>a divalent metal cation</name>
        <dbReference type="ChEBI" id="CHEBI:60240"/>
    </ligand>
</feature>
<feature type="binding site" evidence="1">
    <location>
        <position position="99"/>
    </location>
    <ligand>
        <name>a divalent metal cation</name>
        <dbReference type="ChEBI" id="CHEBI:60240"/>
    </ligand>
</feature>